<comment type="function">
    <text evidence="1">Removes the pyruvyl group from chorismate, with concomitant aromatization of the ring, to provide 4-hydroxybenzoate (4HB) for the ubiquinone pathway.</text>
</comment>
<comment type="catalytic activity">
    <reaction evidence="1">
        <text>chorismate = 4-hydroxybenzoate + pyruvate</text>
        <dbReference type="Rhea" id="RHEA:16505"/>
        <dbReference type="ChEBI" id="CHEBI:15361"/>
        <dbReference type="ChEBI" id="CHEBI:17879"/>
        <dbReference type="ChEBI" id="CHEBI:29748"/>
        <dbReference type="EC" id="4.1.3.40"/>
    </reaction>
</comment>
<comment type="pathway">
    <text evidence="1">Cofactor biosynthesis; ubiquinone biosynthesis.</text>
</comment>
<comment type="subcellular location">
    <subcellularLocation>
        <location evidence="1">Cytoplasm</location>
    </subcellularLocation>
</comment>
<comment type="similarity">
    <text evidence="1">Belongs to the UbiC family.</text>
</comment>
<keyword id="KW-0963">Cytoplasm</keyword>
<keyword id="KW-0456">Lyase</keyword>
<keyword id="KW-0670">Pyruvate</keyword>
<keyword id="KW-0831">Ubiquinone biosynthesis</keyword>
<accession>A3M775</accession>
<gene>
    <name evidence="1" type="primary">ubiC</name>
    <name type="ordered locus">A1S_2350</name>
</gene>
<protein>
    <recommendedName>
        <fullName evidence="1">Probable chorismate pyruvate-lyase</fullName>
        <shortName evidence="1">CL</shortName>
        <shortName evidence="1">CPL</shortName>
        <ecNumber evidence="1">4.1.3.40</ecNumber>
    </recommendedName>
</protein>
<evidence type="ECO:0000255" key="1">
    <source>
        <dbReference type="HAMAP-Rule" id="MF_01632"/>
    </source>
</evidence>
<dbReference type="EC" id="4.1.3.40" evidence="1"/>
<dbReference type="EMBL" id="CP000521">
    <property type="protein sequence ID" value="ABO12769.2"/>
    <property type="molecule type" value="Genomic_DNA"/>
</dbReference>
<dbReference type="RefSeq" id="WP_001231791.1">
    <property type="nucleotide sequence ID" value="NZ_CP053098.1"/>
</dbReference>
<dbReference type="SMR" id="A3M775"/>
<dbReference type="KEGG" id="acb:A1S_2350"/>
<dbReference type="HOGENOM" id="CLU_096824_2_1_6"/>
<dbReference type="UniPathway" id="UPA00232"/>
<dbReference type="GO" id="GO:0005829">
    <property type="term" value="C:cytosol"/>
    <property type="evidence" value="ECO:0007669"/>
    <property type="project" value="TreeGrafter"/>
</dbReference>
<dbReference type="GO" id="GO:0008813">
    <property type="term" value="F:chorismate lyase activity"/>
    <property type="evidence" value="ECO:0007669"/>
    <property type="project" value="UniProtKB-UniRule"/>
</dbReference>
<dbReference type="GO" id="GO:0042866">
    <property type="term" value="P:pyruvate biosynthetic process"/>
    <property type="evidence" value="ECO:0007669"/>
    <property type="project" value="UniProtKB-UniRule"/>
</dbReference>
<dbReference type="GO" id="GO:0006744">
    <property type="term" value="P:ubiquinone biosynthetic process"/>
    <property type="evidence" value="ECO:0007669"/>
    <property type="project" value="UniProtKB-UniRule"/>
</dbReference>
<dbReference type="Gene3D" id="3.40.1410.10">
    <property type="entry name" value="Chorismate lyase-like"/>
    <property type="match status" value="1"/>
</dbReference>
<dbReference type="HAMAP" id="MF_01632">
    <property type="entry name" value="UbiC"/>
    <property type="match status" value="1"/>
</dbReference>
<dbReference type="InterPro" id="IPR007440">
    <property type="entry name" value="Chorismate--pyruvate_lyase"/>
</dbReference>
<dbReference type="InterPro" id="IPR028978">
    <property type="entry name" value="Chorismate_lyase_/UTRA_dom_sf"/>
</dbReference>
<dbReference type="PANTHER" id="PTHR38683">
    <property type="entry name" value="CHORISMATE PYRUVATE-LYASE"/>
    <property type="match status" value="1"/>
</dbReference>
<dbReference type="PANTHER" id="PTHR38683:SF1">
    <property type="entry name" value="CHORISMATE PYRUVATE-LYASE"/>
    <property type="match status" value="1"/>
</dbReference>
<dbReference type="Pfam" id="PF04345">
    <property type="entry name" value="Chor_lyase"/>
    <property type="match status" value="1"/>
</dbReference>
<dbReference type="SUPFAM" id="SSF64288">
    <property type="entry name" value="Chorismate lyase-like"/>
    <property type="match status" value="1"/>
</dbReference>
<reference key="1">
    <citation type="journal article" date="2007" name="Genes Dev.">
        <title>New insights into Acinetobacter baumannii pathogenesis revealed by high-density pyrosequencing and transposon mutagenesis.</title>
        <authorList>
            <person name="Smith M.G."/>
            <person name="Gianoulis T.A."/>
            <person name="Pukatzki S."/>
            <person name="Mekalanos J.J."/>
            <person name="Ornston L.N."/>
            <person name="Gerstein M."/>
            <person name="Snyder M."/>
        </authorList>
    </citation>
    <scope>NUCLEOTIDE SEQUENCE [LARGE SCALE GENOMIC DNA]</scope>
    <source>
        <strain>ATCC 17978 / DSM 105126 / CIP 53.77 / LMG 1025 / NCDC KC755 / 5377</strain>
    </source>
</reference>
<name>UBIC_ACIBT</name>
<proteinExistence type="inferred from homology"/>
<organism>
    <name type="scientific">Acinetobacter baumannii (strain ATCC 17978 / DSM 105126 / CIP 53.77 / LMG 1025 / NCDC KC755 / 5377)</name>
    <dbReference type="NCBI Taxonomy" id="400667"/>
    <lineage>
        <taxon>Bacteria</taxon>
        <taxon>Pseudomonadati</taxon>
        <taxon>Pseudomonadota</taxon>
        <taxon>Gammaproteobacteria</taxon>
        <taxon>Moraxellales</taxon>
        <taxon>Moraxellaceae</taxon>
        <taxon>Acinetobacter</taxon>
        <taxon>Acinetobacter calcoaceticus/baumannii complex</taxon>
    </lineage>
</organism>
<sequence length="169" mass="19992">MRKRQPVLKQEKTLNPELKTWLYASGSLTQQLTELGGGKFSVKPFKEHFQRLTFADSQWMNMPHTHTSWVRETYLYGSDVEPWVKAKSIFPIQSLQKKARIFQHIGSKPIGLFLFQRTTPLCDRRVIRLPEGWTRQSCYTWHGCKFIVQETFLPAFEAFLYQQHDKELL</sequence>
<feature type="chain" id="PRO_0000292059" description="Probable chorismate pyruvate-lyase">
    <location>
        <begin position="1"/>
        <end position="169"/>
    </location>
</feature>
<feature type="binding site" evidence="1">
    <location>
        <position position="71"/>
    </location>
    <ligand>
        <name>substrate</name>
    </ligand>
</feature>
<feature type="binding site" evidence="1">
    <location>
        <position position="110"/>
    </location>
    <ligand>
        <name>substrate</name>
    </ligand>
</feature>
<feature type="binding site" evidence="1">
    <location>
        <position position="150"/>
    </location>
    <ligand>
        <name>substrate</name>
    </ligand>
</feature>